<proteinExistence type="inferred from homology"/>
<comment type="function">
    <text evidence="1">APOE is an apolipoprotein, a protein associating with lipid particles, that mainly functions in lipoprotein-mediated lipid transport between organs via the plasma and interstitial fluids. APOE is a core component of plasma lipoproteins and is involved in their production, conversion and clearance. Apolipoproteins are amphipathic molecules that interact both with lipids of the lipoprotein particle core and the aqueous environment of the plasma. As such, APOE associates with chylomicrons, chylomicron remnants, very low density lipoproteins (VLDL) and intermediate density lipoproteins (IDL) but shows a preferential binding to high-density lipoproteins (HDL). It also binds a wide range of cellular receptors including the LDL receptor/LDLR, the LDL receptor-related proteins LRP1, LRP2 and LRP8 and the very low-density lipoprotein receptor/VLDLR that mediate the cellular uptake of the APOE-containing lipoprotein particles. Finally, APOE also has a heparin-binding activity and binds heparan-sulfate proteoglycans on the surface of cells, a property that supports the capture and the receptor-mediated uptake of APOE-containing lipoproteins by cells. A main function of APOE is to mediate lipoprotein clearance through the uptake of chylomicrons, VLDLs, and HDLs by hepatocytes. APOE is also involved in the biosynthesis by the liver of VLDLs as well as their uptake by peripheral tissues ensuring the delivery of triglycerides and energy storage in muscle, heart and adipose tissues. By participating in the lipoprotein-mediated distribution of lipids among tissues, APOE plays a critical role in plasma and tissues lipid homeostasis. APOE is also involved in two steps of reverse cholesterol transport, the HDLs-mediated transport of cholesterol from peripheral tissues to the liver, and thereby plays an important role in cholesterol homeostasis. First, it is functionally associated with ABCA1 in the biogenesis of HDLs in tissues. Second, it is enriched in circulating HDLs and mediates their uptake by hepatocytes. APOE also plays an important role in lipid transport in the central nervous system, regulating neuron survival and sprouting.</text>
</comment>
<comment type="subunit">
    <text evidence="1">Homotetramer. May interact with ABCA1; functionally associated with ABCA1 in the biogenesis of HDLs. May interact with APP/A4 amyloid-beta peptide; the interaction is extremely stable in vitro but its physiological significance is unclear. May interact with MAPT. May interact with MAP2. In the cerebrospinal fluid, interacts with secreted SORL1. Interacts with PMEL; this allows the loading of PMEL luminal fragment on ILVs to induce fibril nucleation.</text>
</comment>
<comment type="subcellular location">
    <subcellularLocation>
        <location evidence="1">Secreted</location>
    </subcellularLocation>
    <subcellularLocation>
        <location evidence="1">Secreted</location>
        <location evidence="1">Extracellular space</location>
    </subcellularLocation>
    <subcellularLocation>
        <location evidence="1">Secreted</location>
        <location evidence="1">Extracellular space</location>
        <location evidence="1">Extracellular matrix</location>
    </subcellularLocation>
    <subcellularLocation>
        <location evidence="1">Extracellular vesicle</location>
    </subcellularLocation>
    <subcellularLocation>
        <location evidence="1">Endosome</location>
        <location evidence="1">Multivesicular body</location>
    </subcellularLocation>
    <text evidence="1">In the plasma, APOE is associated with chylomicrons, chylomicrons remnants, VLDL, LDL and HDL lipoproteins. Lipid poor oligomeric APOE is associated with the extracellular matrix in a calcium- and heparan-sulfate proteoglycans-dependent manner. Lipidation induces the release from the extracellular matrix. Colocalizes with CD63 and PMEL at exosomes and in intraluminal vesicles within multivesicular endosomes.</text>
</comment>
<comment type="PTM">
    <text evidence="1">APOE exists as multiple glycosylated and sialylated glycoforms within cells and in plasma. The extent of glycosylation and sialylation are tissue and context specific.</text>
</comment>
<comment type="PTM">
    <text evidence="1">Glycated in plasma VLDL.</text>
</comment>
<comment type="PTM">
    <text evidence="1">Phosphorylated by FAM20C in the extracellular medium.</text>
</comment>
<comment type="similarity">
    <text evidence="4">Belongs to the apolipoprotein A1/A4/E family.</text>
</comment>
<gene>
    <name type="primary">APOE</name>
</gene>
<keyword id="KW-0162">Chylomicron</keyword>
<keyword id="KW-0967">Endosome</keyword>
<keyword id="KW-0272">Extracellular matrix</keyword>
<keyword id="KW-0325">Glycoprotein</keyword>
<keyword id="KW-0345">HDL</keyword>
<keyword id="KW-0358">Heparin-binding</keyword>
<keyword id="KW-0445">Lipid transport</keyword>
<keyword id="KW-0446">Lipid-binding</keyword>
<keyword id="KW-0558">Oxidation</keyword>
<keyword id="KW-0597">Phosphoprotein</keyword>
<keyword id="KW-0677">Repeat</keyword>
<keyword id="KW-0964">Secreted</keyword>
<keyword id="KW-0732">Signal</keyword>
<keyword id="KW-0813">Transport</keyword>
<keyword id="KW-0850">VLDL</keyword>
<evidence type="ECO:0000250" key="1">
    <source>
        <dbReference type="UniProtKB" id="P02649"/>
    </source>
</evidence>
<evidence type="ECO:0000250" key="2">
    <source>
        <dbReference type="UniProtKB" id="P08226"/>
    </source>
</evidence>
<evidence type="ECO:0000255" key="3"/>
<evidence type="ECO:0000305" key="4"/>
<organism>
    <name type="scientific">Arctocephalus gazella</name>
    <name type="common">Antarctic fur seal</name>
    <dbReference type="NCBI Taxonomy" id="37190"/>
    <lineage>
        <taxon>Eukaryota</taxon>
        <taxon>Metazoa</taxon>
        <taxon>Chordata</taxon>
        <taxon>Craniata</taxon>
        <taxon>Vertebrata</taxon>
        <taxon>Euteleostomi</taxon>
        <taxon>Mammalia</taxon>
        <taxon>Eutheria</taxon>
        <taxon>Laurasiatheria</taxon>
        <taxon>Carnivora</taxon>
        <taxon>Caniformia</taxon>
        <taxon>Pinnipedia</taxon>
        <taxon>Otariidae</taxon>
        <taxon>Arctocephalus</taxon>
    </lineage>
</organism>
<accession>P0DTT1</accession>
<protein>
    <recommendedName>
        <fullName>Apolipoprotein E</fullName>
        <shortName>Apo-E</shortName>
    </recommendedName>
</protein>
<sequence>MKVLWAALVVALLAGCWADVEPESPLEENLEPELEPKRELEQEVEPEAGWQAGQPWELALARFWDYLRWVQTLSDQVQEEVLSNQVTQELTTLMEETMKEIKAYRAELEEQLGPMASETQARVAKELQAAQARLRSDMEDVRTRLSQYRGEVQAMLGQSTEELRARFASHMRKLRKRVLRDAEDLQKRLAVYRAGVREGAERSVSTIRERLWPLLEQARTRHAKVDALATQPLRERVNALGQQLRGRLEEMGSRARSHLDEVREQMEEVQAKMEEQANQMRQQAEPFQARLKGWFEPLVEDMQRQWAVLVEKVQAAVGTSPTTPPVETK</sequence>
<name>APOE_ARCGZ</name>
<feature type="signal peptide" evidence="3">
    <location>
        <begin position="1"/>
        <end position="18"/>
    </location>
</feature>
<feature type="chain" id="PRO_0000449197" description="Apolipoprotein E">
    <location>
        <begin position="19"/>
        <end position="329"/>
    </location>
</feature>
<feature type="repeat" description="1">
    <location>
        <begin position="92"/>
        <end position="113"/>
    </location>
</feature>
<feature type="repeat" description="2">
    <location>
        <begin position="114"/>
        <end position="135"/>
    </location>
</feature>
<feature type="repeat" description="3">
    <location>
        <begin position="136"/>
        <end position="157"/>
    </location>
</feature>
<feature type="repeat" description="4">
    <location>
        <begin position="158"/>
        <end position="179"/>
    </location>
</feature>
<feature type="repeat" description="5">
    <location>
        <begin position="180"/>
        <end position="201"/>
    </location>
</feature>
<feature type="repeat" description="6">
    <location>
        <begin position="202"/>
        <end position="223"/>
    </location>
</feature>
<feature type="repeat" description="7">
    <location>
        <begin position="224"/>
        <end position="245"/>
    </location>
</feature>
<feature type="repeat" description="8">
    <location>
        <begin position="246"/>
        <end position="267"/>
    </location>
</feature>
<feature type="region of interest" description="8 X 22 AA approximate tandem repeats">
    <location>
        <begin position="92"/>
        <end position="267"/>
    </location>
</feature>
<feature type="region of interest" description="LDL and other lipoprotein receptors binding" evidence="1">
    <location>
        <begin position="170"/>
        <end position="180"/>
    </location>
</feature>
<feature type="region of interest" description="Lipid-binding and lipoprotein association" evidence="1">
    <location>
        <begin position="222"/>
        <end position="302"/>
    </location>
</feature>
<feature type="region of interest" description="Homooligomerization" evidence="1">
    <location>
        <begin position="278"/>
        <end position="329"/>
    </location>
</feature>
<feature type="region of interest" description="Specificity for association with VLDL" evidence="1">
    <location>
        <begin position="290"/>
        <end position="302"/>
    </location>
</feature>
<feature type="binding site" evidence="1">
    <location>
        <begin position="174"/>
        <end position="177"/>
    </location>
    <ligand>
        <name>heparin</name>
        <dbReference type="ChEBI" id="CHEBI:28304"/>
    </ligand>
</feature>
<feature type="binding site" evidence="1">
    <location>
        <begin position="241"/>
        <end position="248"/>
    </location>
    <ligand>
        <name>heparin</name>
        <dbReference type="ChEBI" id="CHEBI:28304"/>
    </ligand>
</feature>
<feature type="modified residue" description="Methionine sulfoxide" evidence="2">
    <location>
        <position position="155"/>
    </location>
</feature>
<feature type="modified residue" description="Phosphoserine" evidence="1">
    <location>
        <position position="159"/>
    </location>
</feature>
<dbReference type="EMBL" id="UIRR01000011">
    <property type="status" value="NOT_ANNOTATED_CDS"/>
    <property type="molecule type" value="Genomic_DNA"/>
</dbReference>
<dbReference type="SMR" id="P0DTT1"/>
<dbReference type="GO" id="GO:0042627">
    <property type="term" value="C:chylomicron"/>
    <property type="evidence" value="ECO:0007669"/>
    <property type="project" value="UniProtKB-KW"/>
</dbReference>
<dbReference type="GO" id="GO:0070062">
    <property type="term" value="C:extracellular exosome"/>
    <property type="evidence" value="ECO:0000250"/>
    <property type="project" value="UniProtKB"/>
</dbReference>
<dbReference type="GO" id="GO:0034364">
    <property type="term" value="C:high-density lipoprotein particle"/>
    <property type="evidence" value="ECO:0007669"/>
    <property type="project" value="UniProtKB-KW"/>
</dbReference>
<dbReference type="GO" id="GO:0034362">
    <property type="term" value="C:low-density lipoprotein particle"/>
    <property type="evidence" value="ECO:0007669"/>
    <property type="project" value="TreeGrafter"/>
</dbReference>
<dbReference type="GO" id="GO:0097487">
    <property type="term" value="C:multivesicular body, internal vesicle"/>
    <property type="evidence" value="ECO:0000250"/>
    <property type="project" value="UniProtKB"/>
</dbReference>
<dbReference type="GO" id="GO:0034361">
    <property type="term" value="C:very-low-density lipoprotein particle"/>
    <property type="evidence" value="ECO:0007669"/>
    <property type="project" value="UniProtKB-KW"/>
</dbReference>
<dbReference type="GO" id="GO:0120020">
    <property type="term" value="F:cholesterol transfer activity"/>
    <property type="evidence" value="ECO:0007669"/>
    <property type="project" value="TreeGrafter"/>
</dbReference>
<dbReference type="GO" id="GO:0008201">
    <property type="term" value="F:heparin binding"/>
    <property type="evidence" value="ECO:0007669"/>
    <property type="project" value="UniProtKB-KW"/>
</dbReference>
<dbReference type="GO" id="GO:0060228">
    <property type="term" value="F:phosphatidylcholine-sterol O-acyltransferase activator activity"/>
    <property type="evidence" value="ECO:0007669"/>
    <property type="project" value="TreeGrafter"/>
</dbReference>
<dbReference type="GO" id="GO:0005543">
    <property type="term" value="F:phospholipid binding"/>
    <property type="evidence" value="ECO:0007669"/>
    <property type="project" value="TreeGrafter"/>
</dbReference>
<dbReference type="GO" id="GO:0055090">
    <property type="term" value="P:acylglycerol homeostasis"/>
    <property type="evidence" value="ECO:0007669"/>
    <property type="project" value="TreeGrafter"/>
</dbReference>
<dbReference type="GO" id="GO:0033344">
    <property type="term" value="P:cholesterol efflux"/>
    <property type="evidence" value="ECO:0007669"/>
    <property type="project" value="TreeGrafter"/>
</dbReference>
<dbReference type="GO" id="GO:0008203">
    <property type="term" value="P:cholesterol metabolic process"/>
    <property type="evidence" value="ECO:0007669"/>
    <property type="project" value="TreeGrafter"/>
</dbReference>
<dbReference type="GO" id="GO:0042157">
    <property type="term" value="P:lipoprotein metabolic process"/>
    <property type="evidence" value="ECO:0007669"/>
    <property type="project" value="InterPro"/>
</dbReference>
<dbReference type="GO" id="GO:0032438">
    <property type="term" value="P:melanosome organization"/>
    <property type="evidence" value="ECO:0000250"/>
    <property type="project" value="UniProtKB"/>
</dbReference>
<dbReference type="GO" id="GO:0033700">
    <property type="term" value="P:phospholipid efflux"/>
    <property type="evidence" value="ECO:0007669"/>
    <property type="project" value="TreeGrafter"/>
</dbReference>
<dbReference type="FunFam" id="1.20.120.20:FF:000002">
    <property type="entry name" value="Apolipoprotein E"/>
    <property type="match status" value="1"/>
</dbReference>
<dbReference type="FunFam" id="1.20.120.20:FF:000003">
    <property type="entry name" value="Apolipoprotein E"/>
    <property type="match status" value="1"/>
</dbReference>
<dbReference type="Gene3D" id="1.20.120.20">
    <property type="entry name" value="Apolipoprotein"/>
    <property type="match status" value="2"/>
</dbReference>
<dbReference type="InterPro" id="IPR000074">
    <property type="entry name" value="ApoA_E"/>
</dbReference>
<dbReference type="InterPro" id="IPR050163">
    <property type="entry name" value="Apolipoprotein_A1/A4/E"/>
</dbReference>
<dbReference type="PANTHER" id="PTHR18976">
    <property type="entry name" value="APOLIPOPROTEIN"/>
    <property type="match status" value="1"/>
</dbReference>
<dbReference type="PANTHER" id="PTHR18976:SF2">
    <property type="entry name" value="APOLIPOPROTEIN E"/>
    <property type="match status" value="1"/>
</dbReference>
<dbReference type="Pfam" id="PF01442">
    <property type="entry name" value="Apolipoprotein"/>
    <property type="match status" value="1"/>
</dbReference>
<dbReference type="SUPFAM" id="SSF58113">
    <property type="entry name" value="Apolipoprotein A-I"/>
    <property type="match status" value="1"/>
</dbReference>
<reference key="1">
    <citation type="submission" date="2018-07" db="EMBL/GenBank/DDBJ databases">
        <authorList>
            <person name="Pophaly D.S."/>
            <person name="Wolf J."/>
        </authorList>
    </citation>
    <scope>NUCLEOTIDE SEQUENCE [LARGE SCALE GENOMIC DNA]</scope>
</reference>
<reference key="2">
    <citation type="unpublished observations" date="2019-12">
        <authorList>
            <person name="Puppione D.L."/>
        </authorList>
    </citation>
    <scope>IDENTIFICATION</scope>
</reference>